<reference key="1">
    <citation type="journal article" date="2008" name="J. Bacteriol.">
        <title>The complete genome sequence of Escherichia coli DH10B: insights into the biology of a laboratory workhorse.</title>
        <authorList>
            <person name="Durfee T."/>
            <person name="Nelson R."/>
            <person name="Baldwin S."/>
            <person name="Plunkett G. III"/>
            <person name="Burland V."/>
            <person name="Mau B."/>
            <person name="Petrosino J.F."/>
            <person name="Qin X."/>
            <person name="Muzny D.M."/>
            <person name="Ayele M."/>
            <person name="Gibbs R.A."/>
            <person name="Csorgo B."/>
            <person name="Posfai G."/>
            <person name="Weinstock G.M."/>
            <person name="Blattner F.R."/>
        </authorList>
    </citation>
    <scope>NUCLEOTIDE SEQUENCE [LARGE SCALE GENOMIC DNA]</scope>
    <source>
        <strain>K12 / DH10B</strain>
    </source>
</reference>
<sequence>MTAIAPVITIDGPSGAGKGTLCKAMAEALQWHLLDSGAIYRVLALAALHHHVDVASEDALVPLASHLDVRFVSTNGNLEVILEGEDVSGEIRTQEVANAASQVAAFPRVREALLRRQRAFRELPGLIADGRDMGTVVFPDAPVKIFLDASSEERAHRRMLQLQEKGFSVNFERLLAEIKERDDRDRNRAVAPLVPAADALVLDSTTLSIEQVIEKALQYARQKLALA</sequence>
<dbReference type="EC" id="2.7.4.25" evidence="1"/>
<dbReference type="EMBL" id="CP000948">
    <property type="protein sequence ID" value="ACB02110.1"/>
    <property type="molecule type" value="Genomic_DNA"/>
</dbReference>
<dbReference type="RefSeq" id="WP_000125016.1">
    <property type="nucleotide sequence ID" value="NC_010473.1"/>
</dbReference>
<dbReference type="SMR" id="B1X850"/>
<dbReference type="GeneID" id="93776507"/>
<dbReference type="KEGG" id="ecd:ECDH10B_0980"/>
<dbReference type="HOGENOM" id="CLU_079959_0_2_6"/>
<dbReference type="GO" id="GO:0005829">
    <property type="term" value="C:cytosol"/>
    <property type="evidence" value="ECO:0007669"/>
    <property type="project" value="TreeGrafter"/>
</dbReference>
<dbReference type="GO" id="GO:0005524">
    <property type="term" value="F:ATP binding"/>
    <property type="evidence" value="ECO:0007669"/>
    <property type="project" value="UniProtKB-UniRule"/>
</dbReference>
<dbReference type="GO" id="GO:0036430">
    <property type="term" value="F:CMP kinase activity"/>
    <property type="evidence" value="ECO:0007669"/>
    <property type="project" value="RHEA"/>
</dbReference>
<dbReference type="GO" id="GO:0036431">
    <property type="term" value="F:dCMP kinase activity"/>
    <property type="evidence" value="ECO:0007669"/>
    <property type="project" value="RHEA"/>
</dbReference>
<dbReference type="GO" id="GO:0015949">
    <property type="term" value="P:nucleobase-containing small molecule interconversion"/>
    <property type="evidence" value="ECO:0007669"/>
    <property type="project" value="TreeGrafter"/>
</dbReference>
<dbReference type="GO" id="GO:0006220">
    <property type="term" value="P:pyrimidine nucleotide metabolic process"/>
    <property type="evidence" value="ECO:0007669"/>
    <property type="project" value="UniProtKB-UniRule"/>
</dbReference>
<dbReference type="CDD" id="cd02020">
    <property type="entry name" value="CMPK"/>
    <property type="match status" value="1"/>
</dbReference>
<dbReference type="FunFam" id="3.40.50.300:FF:000262">
    <property type="entry name" value="Cytidylate kinase"/>
    <property type="match status" value="1"/>
</dbReference>
<dbReference type="Gene3D" id="3.40.50.300">
    <property type="entry name" value="P-loop containing nucleotide triphosphate hydrolases"/>
    <property type="match status" value="1"/>
</dbReference>
<dbReference type="HAMAP" id="MF_00238">
    <property type="entry name" value="Cytidyl_kinase_type1"/>
    <property type="match status" value="1"/>
</dbReference>
<dbReference type="InterPro" id="IPR003136">
    <property type="entry name" value="Cytidylate_kin"/>
</dbReference>
<dbReference type="InterPro" id="IPR011994">
    <property type="entry name" value="Cytidylate_kinase_dom"/>
</dbReference>
<dbReference type="InterPro" id="IPR027417">
    <property type="entry name" value="P-loop_NTPase"/>
</dbReference>
<dbReference type="NCBIfam" id="TIGR00017">
    <property type="entry name" value="cmk"/>
    <property type="match status" value="1"/>
</dbReference>
<dbReference type="PANTHER" id="PTHR21299:SF2">
    <property type="entry name" value="CYTIDYLATE KINASE"/>
    <property type="match status" value="1"/>
</dbReference>
<dbReference type="PANTHER" id="PTHR21299">
    <property type="entry name" value="CYTIDYLATE KINASE/PANTOATE-BETA-ALANINE LIGASE"/>
    <property type="match status" value="1"/>
</dbReference>
<dbReference type="Pfam" id="PF02224">
    <property type="entry name" value="Cytidylate_kin"/>
    <property type="match status" value="1"/>
</dbReference>
<dbReference type="SUPFAM" id="SSF52540">
    <property type="entry name" value="P-loop containing nucleoside triphosphate hydrolases"/>
    <property type="match status" value="1"/>
</dbReference>
<proteinExistence type="inferred from homology"/>
<keyword id="KW-0067">ATP-binding</keyword>
<keyword id="KW-0963">Cytoplasm</keyword>
<keyword id="KW-0418">Kinase</keyword>
<keyword id="KW-0547">Nucleotide-binding</keyword>
<keyword id="KW-0808">Transferase</keyword>
<evidence type="ECO:0000255" key="1">
    <source>
        <dbReference type="HAMAP-Rule" id="MF_00238"/>
    </source>
</evidence>
<feature type="chain" id="PRO_1000100661" description="Cytidylate kinase">
    <location>
        <begin position="1"/>
        <end position="227"/>
    </location>
</feature>
<feature type="binding site" evidence="1">
    <location>
        <begin position="12"/>
        <end position="20"/>
    </location>
    <ligand>
        <name>ATP</name>
        <dbReference type="ChEBI" id="CHEBI:30616"/>
    </ligand>
</feature>
<organism>
    <name type="scientific">Escherichia coli (strain K12 / DH10B)</name>
    <dbReference type="NCBI Taxonomy" id="316385"/>
    <lineage>
        <taxon>Bacteria</taxon>
        <taxon>Pseudomonadati</taxon>
        <taxon>Pseudomonadota</taxon>
        <taxon>Gammaproteobacteria</taxon>
        <taxon>Enterobacterales</taxon>
        <taxon>Enterobacteriaceae</taxon>
        <taxon>Escherichia</taxon>
    </lineage>
</organism>
<name>KCY_ECODH</name>
<gene>
    <name evidence="1" type="primary">cmk</name>
    <name type="ordered locus">ECDH10B_0980</name>
</gene>
<accession>B1X850</accession>
<comment type="catalytic activity">
    <reaction evidence="1">
        <text>CMP + ATP = CDP + ADP</text>
        <dbReference type="Rhea" id="RHEA:11600"/>
        <dbReference type="ChEBI" id="CHEBI:30616"/>
        <dbReference type="ChEBI" id="CHEBI:58069"/>
        <dbReference type="ChEBI" id="CHEBI:60377"/>
        <dbReference type="ChEBI" id="CHEBI:456216"/>
        <dbReference type="EC" id="2.7.4.25"/>
    </reaction>
</comment>
<comment type="catalytic activity">
    <reaction evidence="1">
        <text>dCMP + ATP = dCDP + ADP</text>
        <dbReference type="Rhea" id="RHEA:25094"/>
        <dbReference type="ChEBI" id="CHEBI:30616"/>
        <dbReference type="ChEBI" id="CHEBI:57566"/>
        <dbReference type="ChEBI" id="CHEBI:58593"/>
        <dbReference type="ChEBI" id="CHEBI:456216"/>
        <dbReference type="EC" id="2.7.4.25"/>
    </reaction>
</comment>
<comment type="subcellular location">
    <subcellularLocation>
        <location evidence="1">Cytoplasm</location>
    </subcellularLocation>
</comment>
<comment type="similarity">
    <text evidence="1">Belongs to the cytidylate kinase family. Type 1 subfamily.</text>
</comment>
<protein>
    <recommendedName>
        <fullName evidence="1">Cytidylate kinase</fullName>
        <shortName evidence="1">CK</shortName>
        <ecNumber evidence="1">2.7.4.25</ecNumber>
    </recommendedName>
    <alternativeName>
        <fullName evidence="1">Cytidine monophosphate kinase</fullName>
        <shortName evidence="1">CMP kinase</shortName>
    </alternativeName>
</protein>